<feature type="chain" id="PRO_1000071024" description="UDP-N-acetylglucosamine--N-acetylmuramyl-(pentapeptide) pyrophosphoryl-undecaprenol N-acetylglucosamine transferase">
    <location>
        <begin position="1"/>
        <end position="342"/>
    </location>
</feature>
<feature type="binding site" evidence="1">
    <location>
        <begin position="10"/>
        <end position="12"/>
    </location>
    <ligand>
        <name>UDP-N-acetyl-alpha-D-glucosamine</name>
        <dbReference type="ChEBI" id="CHEBI:57705"/>
    </ligand>
</feature>
<feature type="binding site" evidence="1">
    <location>
        <position position="124"/>
    </location>
    <ligand>
        <name>UDP-N-acetyl-alpha-D-glucosamine</name>
        <dbReference type="ChEBI" id="CHEBI:57705"/>
    </ligand>
</feature>
<feature type="binding site" evidence="1">
    <location>
        <position position="177"/>
    </location>
    <ligand>
        <name>UDP-N-acetyl-alpha-D-glucosamine</name>
        <dbReference type="ChEBI" id="CHEBI:57705"/>
    </ligand>
</feature>
<feature type="binding site" evidence="1">
    <location>
        <position position="275"/>
    </location>
    <ligand>
        <name>UDP-N-acetyl-alpha-D-glucosamine</name>
        <dbReference type="ChEBI" id="CHEBI:57705"/>
    </ligand>
</feature>
<keyword id="KW-0131">Cell cycle</keyword>
<keyword id="KW-0132">Cell division</keyword>
<keyword id="KW-0997">Cell inner membrane</keyword>
<keyword id="KW-1003">Cell membrane</keyword>
<keyword id="KW-0133">Cell shape</keyword>
<keyword id="KW-0961">Cell wall biogenesis/degradation</keyword>
<keyword id="KW-0328">Glycosyltransferase</keyword>
<keyword id="KW-0472">Membrane</keyword>
<keyword id="KW-0573">Peptidoglycan synthesis</keyword>
<keyword id="KW-0808">Transferase</keyword>
<protein>
    <recommendedName>
        <fullName evidence="1">UDP-N-acetylglucosamine--N-acetylmuramyl-(pentapeptide) pyrophosphoryl-undecaprenol N-acetylglucosamine transferase</fullName>
        <ecNumber evidence="1">2.4.1.227</ecNumber>
    </recommendedName>
    <alternativeName>
        <fullName evidence="1">Undecaprenyl-PP-MurNAc-pentapeptide-UDPGlcNAc GlcNAc transferase</fullName>
    </alternativeName>
</protein>
<proteinExistence type="inferred from homology"/>
<organism>
    <name type="scientific">Campylobacter jejuni subsp. jejuni serotype O:6 (strain 81116 / NCTC 11828)</name>
    <dbReference type="NCBI Taxonomy" id="407148"/>
    <lineage>
        <taxon>Bacteria</taxon>
        <taxon>Pseudomonadati</taxon>
        <taxon>Campylobacterota</taxon>
        <taxon>Epsilonproteobacteria</taxon>
        <taxon>Campylobacterales</taxon>
        <taxon>Campylobacteraceae</taxon>
        <taxon>Campylobacter</taxon>
    </lineage>
</organism>
<evidence type="ECO:0000255" key="1">
    <source>
        <dbReference type="HAMAP-Rule" id="MF_00033"/>
    </source>
</evidence>
<dbReference type="EC" id="2.4.1.227" evidence="1"/>
<dbReference type="EMBL" id="CP000814">
    <property type="protein sequence ID" value="ABV52575.1"/>
    <property type="molecule type" value="Genomic_DNA"/>
</dbReference>
<dbReference type="RefSeq" id="WP_002866070.1">
    <property type="nucleotide sequence ID" value="NC_009839.1"/>
</dbReference>
<dbReference type="SMR" id="A8FM88"/>
<dbReference type="CAZy" id="GT28">
    <property type="family name" value="Glycosyltransferase Family 28"/>
</dbReference>
<dbReference type="KEGG" id="cju:C8J_0976"/>
<dbReference type="HOGENOM" id="CLU_037404_2_1_7"/>
<dbReference type="UniPathway" id="UPA00219"/>
<dbReference type="GO" id="GO:0005886">
    <property type="term" value="C:plasma membrane"/>
    <property type="evidence" value="ECO:0007669"/>
    <property type="project" value="UniProtKB-SubCell"/>
</dbReference>
<dbReference type="GO" id="GO:0051991">
    <property type="term" value="F:UDP-N-acetyl-D-glucosamine:N-acetylmuramoyl-L-alanyl-D-glutamyl-meso-2,6-diaminopimelyl-D-alanyl-D-alanine-diphosphoundecaprenol 4-beta-N-acetylglucosaminlytransferase activity"/>
    <property type="evidence" value="ECO:0007669"/>
    <property type="project" value="RHEA"/>
</dbReference>
<dbReference type="GO" id="GO:0050511">
    <property type="term" value="F:undecaprenyldiphospho-muramoylpentapeptide beta-N-acetylglucosaminyltransferase activity"/>
    <property type="evidence" value="ECO:0007669"/>
    <property type="project" value="UniProtKB-UniRule"/>
</dbReference>
<dbReference type="GO" id="GO:0005975">
    <property type="term" value="P:carbohydrate metabolic process"/>
    <property type="evidence" value="ECO:0007669"/>
    <property type="project" value="InterPro"/>
</dbReference>
<dbReference type="GO" id="GO:0051301">
    <property type="term" value="P:cell division"/>
    <property type="evidence" value="ECO:0007669"/>
    <property type="project" value="UniProtKB-KW"/>
</dbReference>
<dbReference type="GO" id="GO:0071555">
    <property type="term" value="P:cell wall organization"/>
    <property type="evidence" value="ECO:0007669"/>
    <property type="project" value="UniProtKB-KW"/>
</dbReference>
<dbReference type="GO" id="GO:0030259">
    <property type="term" value="P:lipid glycosylation"/>
    <property type="evidence" value="ECO:0007669"/>
    <property type="project" value="UniProtKB-UniRule"/>
</dbReference>
<dbReference type="GO" id="GO:0009252">
    <property type="term" value="P:peptidoglycan biosynthetic process"/>
    <property type="evidence" value="ECO:0007669"/>
    <property type="project" value="UniProtKB-UniRule"/>
</dbReference>
<dbReference type="GO" id="GO:0008360">
    <property type="term" value="P:regulation of cell shape"/>
    <property type="evidence" value="ECO:0007669"/>
    <property type="project" value="UniProtKB-KW"/>
</dbReference>
<dbReference type="CDD" id="cd03785">
    <property type="entry name" value="GT28_MurG"/>
    <property type="match status" value="1"/>
</dbReference>
<dbReference type="Gene3D" id="3.40.50.2000">
    <property type="entry name" value="Glycogen Phosphorylase B"/>
    <property type="match status" value="2"/>
</dbReference>
<dbReference type="HAMAP" id="MF_00033">
    <property type="entry name" value="MurG"/>
    <property type="match status" value="1"/>
</dbReference>
<dbReference type="InterPro" id="IPR006009">
    <property type="entry name" value="GlcNAc_MurG"/>
</dbReference>
<dbReference type="InterPro" id="IPR007235">
    <property type="entry name" value="Glyco_trans_28_C"/>
</dbReference>
<dbReference type="InterPro" id="IPR004276">
    <property type="entry name" value="GlycoTrans_28_N"/>
</dbReference>
<dbReference type="NCBIfam" id="TIGR01133">
    <property type="entry name" value="murG"/>
    <property type="match status" value="1"/>
</dbReference>
<dbReference type="PANTHER" id="PTHR21015:SF22">
    <property type="entry name" value="GLYCOSYLTRANSFERASE"/>
    <property type="match status" value="1"/>
</dbReference>
<dbReference type="PANTHER" id="PTHR21015">
    <property type="entry name" value="UDP-N-ACETYLGLUCOSAMINE--N-ACETYLMURAMYL-(PENTAPEPTIDE) PYROPHOSPHORYL-UNDECAPRENOL N-ACETYLGLUCOSAMINE TRANSFERASE 1"/>
    <property type="match status" value="1"/>
</dbReference>
<dbReference type="Pfam" id="PF04101">
    <property type="entry name" value="Glyco_tran_28_C"/>
    <property type="match status" value="1"/>
</dbReference>
<dbReference type="Pfam" id="PF03033">
    <property type="entry name" value="Glyco_transf_28"/>
    <property type="match status" value="1"/>
</dbReference>
<dbReference type="SUPFAM" id="SSF53756">
    <property type="entry name" value="UDP-Glycosyltransferase/glycogen phosphorylase"/>
    <property type="match status" value="1"/>
</dbReference>
<gene>
    <name evidence="1" type="primary">murG</name>
    <name type="ordered locus">C8J_0976</name>
</gene>
<accession>A8FM88</accession>
<comment type="function">
    <text evidence="1">Cell wall formation. Catalyzes the transfer of a GlcNAc subunit on undecaprenyl-pyrophosphoryl-MurNAc-pentapeptide (lipid intermediate I) to form undecaprenyl-pyrophosphoryl-MurNAc-(pentapeptide)GlcNAc (lipid intermediate II).</text>
</comment>
<comment type="catalytic activity">
    <reaction evidence="1">
        <text>di-trans,octa-cis-undecaprenyl diphospho-N-acetyl-alpha-D-muramoyl-L-alanyl-D-glutamyl-meso-2,6-diaminopimeloyl-D-alanyl-D-alanine + UDP-N-acetyl-alpha-D-glucosamine = di-trans,octa-cis-undecaprenyl diphospho-[N-acetyl-alpha-D-glucosaminyl-(1-&gt;4)]-N-acetyl-alpha-D-muramoyl-L-alanyl-D-glutamyl-meso-2,6-diaminopimeloyl-D-alanyl-D-alanine + UDP + H(+)</text>
        <dbReference type="Rhea" id="RHEA:31227"/>
        <dbReference type="ChEBI" id="CHEBI:15378"/>
        <dbReference type="ChEBI" id="CHEBI:57705"/>
        <dbReference type="ChEBI" id="CHEBI:58223"/>
        <dbReference type="ChEBI" id="CHEBI:61387"/>
        <dbReference type="ChEBI" id="CHEBI:61388"/>
        <dbReference type="EC" id="2.4.1.227"/>
    </reaction>
</comment>
<comment type="pathway">
    <text evidence="1">Cell wall biogenesis; peptidoglycan biosynthesis.</text>
</comment>
<comment type="subcellular location">
    <subcellularLocation>
        <location evidence="1">Cell inner membrane</location>
        <topology evidence="1">Peripheral membrane protein</topology>
        <orientation evidence="1">Cytoplasmic side</orientation>
    </subcellularLocation>
</comment>
<comment type="similarity">
    <text evidence="1">Belongs to the glycosyltransferase 28 family. MurG subfamily.</text>
</comment>
<sequence length="342" mass="38626">MTIALTGGGTGGHLAIVRCLLESAIKKNIECVYIGSQNGQDKAWFENEVRFKEKFFLSSKGVVNQSKFGKISSLLHTLKLSKDCREIFKKYHIQAVFSVGGYSAAPASFAALFSHLPLFIHEQNSKSGSLNMLLKPFATKFFSAFEKEISPYPVADKFFDNARIRKELKNIIFLGGSQGAQFINELALNLAPKLQEQNIKIIHQCGKNDFEKCKKHYQSLNIQADIFDFSLNLEEKMKNADLAISRAGASTLFELCANTLPTIFIPYPYAAKNHQYFNAKFLQDQALCQIFMQNSINLDEFFKSILKLNLENISTRLQNITQKNGADMLIQKALFDNLTFIR</sequence>
<name>MURG_CAMJ8</name>
<reference key="1">
    <citation type="journal article" date="2007" name="J. Bacteriol.">
        <title>The complete genome sequence of Campylobacter jejuni strain 81116 (NCTC11828).</title>
        <authorList>
            <person name="Pearson B.M."/>
            <person name="Gaskin D.J.H."/>
            <person name="Segers R.P.A.M."/>
            <person name="Wells J.M."/>
            <person name="Nuijten P.J.M."/>
            <person name="van Vliet A.H.M."/>
        </authorList>
    </citation>
    <scope>NUCLEOTIDE SEQUENCE [LARGE SCALE GENOMIC DNA]</scope>
    <source>
        <strain>81116 / NCTC 11828</strain>
    </source>
</reference>